<keyword id="KW-1003">Cell membrane</keyword>
<keyword id="KW-0297">G-protein coupled receptor</keyword>
<keyword id="KW-0472">Membrane</keyword>
<keyword id="KW-0597">Phosphoprotein</keyword>
<keyword id="KW-0675">Receptor</keyword>
<keyword id="KW-1185">Reference proteome</keyword>
<keyword id="KW-0807">Transducer</keyword>
<keyword id="KW-0812">Transmembrane</keyword>
<keyword id="KW-1133">Transmembrane helix</keyword>
<protein>
    <recommendedName>
        <fullName>G-protein coupled receptor 15</fullName>
    </recommendedName>
</protein>
<gene>
    <name type="primary">Gpr15</name>
</gene>
<name>GPR15_MOUSE</name>
<accession>Q0VDU3</accession>
<accession>E9QKY6</accession>
<accession>Q3B800</accession>
<comment type="function">
    <text evidence="1 4 5 6">G protein-coupled receptor that plays an important role in immune homeostasis. Acts via its natural ligand GPR15LG, a chemokine-like polypeptide strongly expressed in gastrointestinal tissues. GPR15-GPR15LG signaling axis regulates intestinal homeostasis and inflammation through the migration of immune cells (By similarity). Controls thereby the specific homing of T-cells, particularly FOXP3+ regulatory T-cells (Tregs), to the large intestine lamina propria (PubMed:23661644). Also required for skin localization of thymus-derived dendritic epidermal T-cells (PubMed:24838826). Plays an important role in mediating cytoprotective function as well as angiogenesis of thrombomodulin (PubMed:28386128). Mechanistically, preferentially signals through the Gi/o pathway to inhibit adenylate cyclase activity and activate a phosphatidylinositol-calcium second messenger system that regulates the release of Ca(2+) ions from intracellular stores (By similarity).</text>
</comment>
<comment type="subunit">
    <text evidence="1">Interacts with adapter YWHAE; this interaction promotes ER-to-Golgi transport of GPR15.</text>
</comment>
<comment type="subcellular location">
    <subcellularLocation>
        <location evidence="1">Cell membrane</location>
        <topology evidence="1">Multi-pass membrane protein</topology>
    </subcellularLocation>
</comment>
<comment type="tissue specificity">
    <text evidence="4 5">Highly expressed in gut tissues and lymphoid organs, largely restricted to TCRbeta+ cells (PubMed:23661644). Expressed in fetal thymic dendritic epidermal T-cell precursors (PubMed:24838826).</text>
</comment>
<comment type="PTM">
    <text evidence="1">Phosphorylation is necessary for YWHAE binding and efficient surface expression.</text>
</comment>
<comment type="PTM">
    <text evidence="1">O-glycosylated. Sialylated O-glycans in the N-terminal tail inhibits binding of GPR15LG.</text>
</comment>
<comment type="PTM">
    <text evidence="1">Sulfation is required for efficient binding of GPR15LG.</text>
</comment>
<comment type="disruption phenotype">
    <text evidence="4 5">GPR15-deficient mice are prone to develop more severe large intestine inflammation, which can be rescued by the transfer of GPR15-sufficient regulatory T-cells (PubMed:23661644). In addition, dendritic epidermal T-cells from mutant mice remain low at birth but reach near normal levels in adult skin (PubMed:24838826).</text>
</comment>
<comment type="similarity">
    <text evidence="3">Belongs to the G-protein coupled receptor 1 family.</text>
</comment>
<sequence length="360" mass="40542">MEPATALLIVDYYDYTSPDPPFLETPSHLSYTSVFLPIFYTVVFLTGVVGNFILMIALHFKRGNRRLIDIFIINLAASDFIFLVTVPLWMDKEASLGLWRTGSFLCKGSSYVISVNMHCSVFLLTCMSMDRYLAIMHPALAKRLRRRSSAYAVCAVVWIISCVLGLPTLLSRELTHIEGKPYCAEKKPTSLKLMWGLVALITTFFVPLLSIVTCYCCITRRLCAHYQQSGKHNKKLKKSIKIVIIAVAAFTVSWVPFNTFKLLAIVSGFQPEGLFHSEALQLAMNVTGPLAFASSCVNPLIYYVFDSYIRRAIVRCLCPCLKTHNFGSSTETSDSHLTKALSNFIHAEDFIRRRKRSVSL</sequence>
<organism>
    <name type="scientific">Mus musculus</name>
    <name type="common">Mouse</name>
    <dbReference type="NCBI Taxonomy" id="10090"/>
    <lineage>
        <taxon>Eukaryota</taxon>
        <taxon>Metazoa</taxon>
        <taxon>Chordata</taxon>
        <taxon>Craniata</taxon>
        <taxon>Vertebrata</taxon>
        <taxon>Euteleostomi</taxon>
        <taxon>Mammalia</taxon>
        <taxon>Eutheria</taxon>
        <taxon>Euarchontoglires</taxon>
        <taxon>Glires</taxon>
        <taxon>Rodentia</taxon>
        <taxon>Myomorpha</taxon>
        <taxon>Muroidea</taxon>
        <taxon>Muridae</taxon>
        <taxon>Murinae</taxon>
        <taxon>Mus</taxon>
        <taxon>Mus</taxon>
    </lineage>
</organism>
<reference key="1">
    <citation type="journal article" date="2009" name="PLoS Biol.">
        <title>Lineage-specific biology revealed by a finished genome assembly of the mouse.</title>
        <authorList>
            <person name="Church D.M."/>
            <person name="Goodstadt L."/>
            <person name="Hillier L.W."/>
            <person name="Zody M.C."/>
            <person name="Goldstein S."/>
            <person name="She X."/>
            <person name="Bult C.J."/>
            <person name="Agarwala R."/>
            <person name="Cherry J.L."/>
            <person name="DiCuccio M."/>
            <person name="Hlavina W."/>
            <person name="Kapustin Y."/>
            <person name="Meric P."/>
            <person name="Maglott D."/>
            <person name="Birtle Z."/>
            <person name="Marques A.C."/>
            <person name="Graves T."/>
            <person name="Zhou S."/>
            <person name="Teague B."/>
            <person name="Potamousis K."/>
            <person name="Churas C."/>
            <person name="Place M."/>
            <person name="Herschleb J."/>
            <person name="Runnheim R."/>
            <person name="Forrest D."/>
            <person name="Amos-Landgraf J."/>
            <person name="Schwartz D.C."/>
            <person name="Cheng Z."/>
            <person name="Lindblad-Toh K."/>
            <person name="Eichler E.E."/>
            <person name="Ponting C.P."/>
        </authorList>
    </citation>
    <scope>NUCLEOTIDE SEQUENCE [LARGE SCALE GENOMIC DNA]</scope>
    <source>
        <strain>C57BL/6J</strain>
    </source>
</reference>
<reference key="2">
    <citation type="journal article" date="2004" name="Genome Res.">
        <title>The status, quality, and expansion of the NIH full-length cDNA project: the Mammalian Gene Collection (MGC).</title>
        <authorList>
            <consortium name="The MGC Project Team"/>
        </authorList>
    </citation>
    <scope>NUCLEOTIDE SEQUENCE [LARGE SCALE MRNA]</scope>
</reference>
<reference key="3">
    <citation type="journal article" date="2013" name="Science">
        <title>GPR15-mediated homing controls immune homeostasis in the large intestine mucosa.</title>
        <authorList>
            <person name="Kim S.V."/>
            <person name="Xiang W.V."/>
            <person name="Kwak C."/>
            <person name="Yang Y."/>
            <person name="Lin X.W."/>
            <person name="Ota M."/>
            <person name="Sarpel U."/>
            <person name="Rifkin D.B."/>
            <person name="Xu R."/>
            <person name="Littman D.R."/>
        </authorList>
    </citation>
    <scope>FUNCTION</scope>
    <scope>TISSUE SPECIFICITY</scope>
    <scope>DISRUPTION PHENOTYPE</scope>
</reference>
<reference key="4">
    <citation type="journal article" date="2014" name="Eur. J. Immunol.">
        <title>Orphan chemoattractant receptor GPR15 mediates dendritic epidermal T-cell recruitment to the skin.</title>
        <authorList>
            <person name="Lahl K."/>
            <person name="Sweere J."/>
            <person name="Pan J."/>
            <person name="Butcher E."/>
        </authorList>
    </citation>
    <scope>FUNCTION</scope>
    <scope>DISRUPTION PHENOTYPE</scope>
    <scope>TISSUE SPECIFICITY</scope>
</reference>
<reference key="5">
    <citation type="journal article" date="2017" name="Sci. Rep.">
        <title>G-protein coupled receptor 15 mediates angiogenesis and cytoprotective function of thrombomodulin.</title>
        <authorList>
            <person name="Pan B."/>
            <person name="Wang X."/>
            <person name="Nishioka C."/>
            <person name="Honda G."/>
            <person name="Yokoyama A."/>
            <person name="Zeng L."/>
            <person name="Xu K."/>
            <person name="Ikezoe T."/>
        </authorList>
    </citation>
    <scope>FUNCTION</scope>
</reference>
<evidence type="ECO:0000250" key="1">
    <source>
        <dbReference type="UniProtKB" id="P49685"/>
    </source>
</evidence>
<evidence type="ECO:0000255" key="2"/>
<evidence type="ECO:0000255" key="3">
    <source>
        <dbReference type="PROSITE-ProRule" id="PRU00521"/>
    </source>
</evidence>
<evidence type="ECO:0000269" key="4">
    <source>
    </source>
</evidence>
<evidence type="ECO:0000269" key="5">
    <source>
    </source>
</evidence>
<evidence type="ECO:0000269" key="6">
    <source>
    </source>
</evidence>
<evidence type="ECO:0000305" key="7"/>
<proteinExistence type="evidence at transcript level"/>
<feature type="chain" id="PRO_0000303232" description="G-protein coupled receptor 15">
    <location>
        <begin position="1"/>
        <end position="360"/>
    </location>
</feature>
<feature type="topological domain" description="Extracellular" evidence="2">
    <location>
        <begin position="1"/>
        <end position="33"/>
    </location>
</feature>
<feature type="transmembrane region" description="Helical; Name=1" evidence="2">
    <location>
        <begin position="34"/>
        <end position="54"/>
    </location>
</feature>
<feature type="topological domain" description="Cytoplasmic" evidence="2">
    <location>
        <begin position="55"/>
        <end position="69"/>
    </location>
</feature>
<feature type="transmembrane region" description="Helical; Name=2" evidence="2">
    <location>
        <begin position="70"/>
        <end position="90"/>
    </location>
</feature>
<feature type="topological domain" description="Extracellular" evidence="2">
    <location>
        <begin position="91"/>
        <end position="120"/>
    </location>
</feature>
<feature type="transmembrane region" description="Helical; Name=3" evidence="2">
    <location>
        <begin position="121"/>
        <end position="141"/>
    </location>
</feature>
<feature type="topological domain" description="Cytoplasmic" evidence="2">
    <location>
        <begin position="142"/>
        <end position="149"/>
    </location>
</feature>
<feature type="transmembrane region" description="Helical; Name=4" evidence="2">
    <location>
        <begin position="150"/>
        <end position="170"/>
    </location>
</feature>
<feature type="topological domain" description="Extracellular" evidence="2">
    <location>
        <begin position="171"/>
        <end position="192"/>
    </location>
</feature>
<feature type="transmembrane region" description="Helical; Name=5" evidence="2">
    <location>
        <begin position="193"/>
        <end position="213"/>
    </location>
</feature>
<feature type="topological domain" description="Cytoplasmic" evidence="2">
    <location>
        <begin position="214"/>
        <end position="239"/>
    </location>
</feature>
<feature type="transmembrane region" description="Helical; Name=6" evidence="2">
    <location>
        <begin position="240"/>
        <end position="260"/>
    </location>
</feature>
<feature type="topological domain" description="Extracellular" evidence="2">
    <location>
        <begin position="261"/>
        <end position="284"/>
    </location>
</feature>
<feature type="transmembrane region" description="Helical; Name=7" evidence="2">
    <location>
        <begin position="285"/>
        <end position="305"/>
    </location>
</feature>
<feature type="topological domain" description="Cytoplasmic" evidence="2">
    <location>
        <begin position="306"/>
        <end position="360"/>
    </location>
</feature>
<feature type="modified residue" description="Phosphoserine" evidence="1">
    <location>
        <position position="359"/>
    </location>
</feature>
<feature type="sequence conflict" description="In Ref. 2; AAI07230/AAI07282/AAI07283/AAI19502/AAI19503/AAI19519." evidence="7" ref="2">
    <original>F</original>
    <variation>I</variation>
    <location>
        <position position="22"/>
    </location>
</feature>
<dbReference type="EMBL" id="AC159200">
    <property type="status" value="NOT_ANNOTATED_CDS"/>
    <property type="molecule type" value="Genomic_DNA"/>
</dbReference>
<dbReference type="EMBL" id="BC107229">
    <property type="protein sequence ID" value="AAI07230.1"/>
    <property type="molecule type" value="mRNA"/>
</dbReference>
<dbReference type="EMBL" id="BC107281">
    <property type="protein sequence ID" value="AAI07282.1"/>
    <property type="molecule type" value="mRNA"/>
</dbReference>
<dbReference type="EMBL" id="BC107282">
    <property type="protein sequence ID" value="AAI07283.1"/>
    <property type="molecule type" value="mRNA"/>
</dbReference>
<dbReference type="EMBL" id="BC119501">
    <property type="protein sequence ID" value="AAI19502.1"/>
    <property type="molecule type" value="mRNA"/>
</dbReference>
<dbReference type="EMBL" id="BC119502">
    <property type="protein sequence ID" value="AAI19503.1"/>
    <property type="molecule type" value="mRNA"/>
</dbReference>
<dbReference type="EMBL" id="BC119518">
    <property type="protein sequence ID" value="AAI19519.1"/>
    <property type="molecule type" value="mRNA"/>
</dbReference>
<dbReference type="CCDS" id="CCDS49879.1"/>
<dbReference type="RefSeq" id="NP_001156427.1">
    <property type="nucleotide sequence ID" value="NM_001162955.2"/>
</dbReference>
<dbReference type="SMR" id="Q0VDU3"/>
<dbReference type="FunCoup" id="Q0VDU3">
    <property type="interactions" value="366"/>
</dbReference>
<dbReference type="STRING" id="10090.ENSMUSP00000086731"/>
<dbReference type="PhosphoSitePlus" id="Q0VDU3"/>
<dbReference type="PaxDb" id="10090-ENSMUSP00000086731"/>
<dbReference type="ProteomicsDB" id="271268"/>
<dbReference type="Antibodypedia" id="2944">
    <property type="antibodies" value="386 antibodies from 37 providers"/>
</dbReference>
<dbReference type="Ensembl" id="ENSMUST00000089318.5">
    <property type="protein sequence ID" value="ENSMUSP00000086731.4"/>
    <property type="gene ID" value="ENSMUSG00000047293.8"/>
</dbReference>
<dbReference type="GeneID" id="71223"/>
<dbReference type="KEGG" id="mmu:71223"/>
<dbReference type="UCSC" id="uc007zob.1">
    <property type="organism name" value="mouse"/>
</dbReference>
<dbReference type="AGR" id="MGI:1918473"/>
<dbReference type="CTD" id="2838"/>
<dbReference type="MGI" id="MGI:1918473">
    <property type="gene designation" value="Gpr15"/>
</dbReference>
<dbReference type="VEuPathDB" id="HostDB:ENSMUSG00000047293"/>
<dbReference type="eggNOG" id="ENOG502RCE3">
    <property type="taxonomic scope" value="Eukaryota"/>
</dbReference>
<dbReference type="GeneTree" id="ENSGT01130000278303"/>
<dbReference type="HOGENOM" id="CLU_009579_8_1_1"/>
<dbReference type="InParanoid" id="Q0VDU3"/>
<dbReference type="OMA" id="LTFYCSI"/>
<dbReference type="OrthoDB" id="10037617at2759"/>
<dbReference type="PhylomeDB" id="Q0VDU3"/>
<dbReference type="TreeFam" id="TF330024"/>
<dbReference type="Reactome" id="R-MMU-418555">
    <property type="pathway name" value="G alpha (s) signalling events"/>
</dbReference>
<dbReference type="BioGRID-ORCS" id="71223">
    <property type="hits" value="3 hits in 77 CRISPR screens"/>
</dbReference>
<dbReference type="PRO" id="PR:Q0VDU3"/>
<dbReference type="Proteomes" id="UP000000589">
    <property type="component" value="Chromosome 16"/>
</dbReference>
<dbReference type="RNAct" id="Q0VDU3">
    <property type="molecule type" value="protein"/>
</dbReference>
<dbReference type="Bgee" id="ENSMUSG00000047293">
    <property type="expression patterns" value="Expressed in spermatid and 13 other cell types or tissues"/>
</dbReference>
<dbReference type="GO" id="GO:0005737">
    <property type="term" value="C:cytoplasm"/>
    <property type="evidence" value="ECO:0000266"/>
    <property type="project" value="MGI"/>
</dbReference>
<dbReference type="GO" id="GO:0005768">
    <property type="term" value="C:endosome"/>
    <property type="evidence" value="ECO:0007669"/>
    <property type="project" value="Ensembl"/>
</dbReference>
<dbReference type="GO" id="GO:0005886">
    <property type="term" value="C:plasma membrane"/>
    <property type="evidence" value="ECO:0000250"/>
    <property type="project" value="UniProtKB"/>
</dbReference>
<dbReference type="GO" id="GO:0015026">
    <property type="term" value="F:coreceptor activity"/>
    <property type="evidence" value="ECO:0007669"/>
    <property type="project" value="Ensembl"/>
</dbReference>
<dbReference type="GO" id="GO:0004930">
    <property type="term" value="F:G protein-coupled receptor activity"/>
    <property type="evidence" value="ECO:0000315"/>
    <property type="project" value="MGI"/>
</dbReference>
<dbReference type="GO" id="GO:0001618">
    <property type="term" value="F:virus receptor activity"/>
    <property type="evidence" value="ECO:0007669"/>
    <property type="project" value="Ensembl"/>
</dbReference>
<dbReference type="GO" id="GO:0001525">
    <property type="term" value="P:angiogenesis"/>
    <property type="evidence" value="ECO:0000250"/>
    <property type="project" value="UniProtKB"/>
</dbReference>
<dbReference type="GO" id="GO:0007186">
    <property type="term" value="P:G protein-coupled receptor signaling pathway"/>
    <property type="evidence" value="ECO:0000250"/>
    <property type="project" value="UniProtKB"/>
</dbReference>
<dbReference type="GO" id="GO:0072678">
    <property type="term" value="P:T cell migration"/>
    <property type="evidence" value="ECO:0000315"/>
    <property type="project" value="MGI"/>
</dbReference>
<dbReference type="FunFam" id="1.20.1070.10:FF:000187">
    <property type="entry name" value="G-protein coupled receptor 15"/>
    <property type="match status" value="1"/>
</dbReference>
<dbReference type="Gene3D" id="1.20.1070.10">
    <property type="entry name" value="Rhodopsin 7-helix transmembrane proteins"/>
    <property type="match status" value="1"/>
</dbReference>
<dbReference type="InterPro" id="IPR050119">
    <property type="entry name" value="CCR1-9-like"/>
</dbReference>
<dbReference type="InterPro" id="IPR000276">
    <property type="entry name" value="GPCR_Rhodpsn"/>
</dbReference>
<dbReference type="InterPro" id="IPR017452">
    <property type="entry name" value="GPCR_Rhodpsn_7TM"/>
</dbReference>
<dbReference type="PANTHER" id="PTHR10489">
    <property type="entry name" value="CELL ADHESION MOLECULE"/>
    <property type="match status" value="1"/>
</dbReference>
<dbReference type="PANTHER" id="PTHR10489:SF954">
    <property type="entry name" value="G PROTEIN-COUPLED RECEPTOR 25"/>
    <property type="match status" value="1"/>
</dbReference>
<dbReference type="Pfam" id="PF00001">
    <property type="entry name" value="7tm_1"/>
    <property type="match status" value="1"/>
</dbReference>
<dbReference type="PRINTS" id="PR00237">
    <property type="entry name" value="GPCRRHODOPSN"/>
</dbReference>
<dbReference type="PRINTS" id="PR01157">
    <property type="entry name" value="P2YPURNOCPTR"/>
</dbReference>
<dbReference type="SUPFAM" id="SSF81321">
    <property type="entry name" value="Family A G protein-coupled receptor-like"/>
    <property type="match status" value="1"/>
</dbReference>
<dbReference type="PROSITE" id="PS00237">
    <property type="entry name" value="G_PROTEIN_RECEP_F1_1"/>
    <property type="match status" value="1"/>
</dbReference>
<dbReference type="PROSITE" id="PS50262">
    <property type="entry name" value="G_PROTEIN_RECEP_F1_2"/>
    <property type="match status" value="1"/>
</dbReference>